<comment type="function">
    <text evidence="1">This protein is located at the 30S-50S ribosomal subunit interface and may play a role in the structure and function of the aminoacyl-tRNA binding site.</text>
</comment>
<comment type="similarity">
    <text evidence="1">Belongs to the bacterial ribosomal protein bL19 family.</text>
</comment>
<evidence type="ECO:0000255" key="1">
    <source>
        <dbReference type="HAMAP-Rule" id="MF_00402"/>
    </source>
</evidence>
<evidence type="ECO:0000305" key="2"/>
<gene>
    <name evidence="1" type="primary">rplS</name>
    <name type="ordered locus">OTBS_0396</name>
</gene>
<sequence>MNLIKQFEQEQIKKLTQGKSIPNFRPGDTVKVNLRIIEGANERIQAYQGVVIARANRSISSSFTVRKISHGKGIERKFMLYSPLISSIELIKKGVVRRAKLYYLRNLQGRKAKIREKIFSKDNQ</sequence>
<name>RL19_ORITB</name>
<keyword id="KW-1185">Reference proteome</keyword>
<keyword id="KW-0687">Ribonucleoprotein</keyword>
<keyword id="KW-0689">Ribosomal protein</keyword>
<reference key="1">
    <citation type="journal article" date="2007" name="Proc. Natl. Acad. Sci. U.S.A.">
        <title>The Orientia tsutsugamushi genome reveals massive proliferation of conjugative type IV secretion system and host-cell interaction genes.</title>
        <authorList>
            <person name="Cho N.-H."/>
            <person name="Kim H.-R."/>
            <person name="Lee J.-H."/>
            <person name="Kim S.-Y."/>
            <person name="Kim J."/>
            <person name="Cha S."/>
            <person name="Kim S.-Y."/>
            <person name="Darby A.C."/>
            <person name="Fuxelius H.-H."/>
            <person name="Yin J."/>
            <person name="Kim J.H."/>
            <person name="Kim J."/>
            <person name="Lee S.J."/>
            <person name="Koh Y.-S."/>
            <person name="Jang W.-J."/>
            <person name="Park K.-H."/>
            <person name="Andersson S.G.E."/>
            <person name="Choi M.-S."/>
            <person name="Kim I.-S."/>
        </authorList>
    </citation>
    <scope>NUCLEOTIDE SEQUENCE [LARGE SCALE GENOMIC DNA]</scope>
    <source>
        <strain>Boryong</strain>
    </source>
</reference>
<protein>
    <recommendedName>
        <fullName evidence="1">Large ribosomal subunit protein bL19</fullName>
    </recommendedName>
    <alternativeName>
        <fullName evidence="2">50S ribosomal protein L19</fullName>
    </alternativeName>
</protein>
<feature type="chain" id="PRO_1000049712" description="Large ribosomal subunit protein bL19">
    <location>
        <begin position="1"/>
        <end position="124"/>
    </location>
</feature>
<dbReference type="EMBL" id="AM494475">
    <property type="protein sequence ID" value="CAM79462.1"/>
    <property type="molecule type" value="Genomic_DNA"/>
</dbReference>
<dbReference type="RefSeq" id="WP_011944456.1">
    <property type="nucleotide sequence ID" value="NC_009488.1"/>
</dbReference>
<dbReference type="SMR" id="A5CCN0"/>
<dbReference type="KEGG" id="ots:OTBS_0396"/>
<dbReference type="eggNOG" id="COG0335">
    <property type="taxonomic scope" value="Bacteria"/>
</dbReference>
<dbReference type="HOGENOM" id="CLU_103507_2_1_5"/>
<dbReference type="Proteomes" id="UP000001565">
    <property type="component" value="Chromosome"/>
</dbReference>
<dbReference type="GO" id="GO:0022625">
    <property type="term" value="C:cytosolic large ribosomal subunit"/>
    <property type="evidence" value="ECO:0007669"/>
    <property type="project" value="TreeGrafter"/>
</dbReference>
<dbReference type="GO" id="GO:0003735">
    <property type="term" value="F:structural constituent of ribosome"/>
    <property type="evidence" value="ECO:0007669"/>
    <property type="project" value="InterPro"/>
</dbReference>
<dbReference type="GO" id="GO:0006412">
    <property type="term" value="P:translation"/>
    <property type="evidence" value="ECO:0007669"/>
    <property type="project" value="UniProtKB-UniRule"/>
</dbReference>
<dbReference type="FunFam" id="2.30.30.790:FF:000001">
    <property type="entry name" value="50S ribosomal protein L19"/>
    <property type="match status" value="1"/>
</dbReference>
<dbReference type="Gene3D" id="2.30.30.790">
    <property type="match status" value="1"/>
</dbReference>
<dbReference type="HAMAP" id="MF_00402">
    <property type="entry name" value="Ribosomal_bL19"/>
    <property type="match status" value="1"/>
</dbReference>
<dbReference type="InterPro" id="IPR001857">
    <property type="entry name" value="Ribosomal_bL19"/>
</dbReference>
<dbReference type="InterPro" id="IPR018257">
    <property type="entry name" value="Ribosomal_bL19_CS"/>
</dbReference>
<dbReference type="InterPro" id="IPR038657">
    <property type="entry name" value="Ribosomal_bL19_sf"/>
</dbReference>
<dbReference type="InterPro" id="IPR008991">
    <property type="entry name" value="Translation_prot_SH3-like_sf"/>
</dbReference>
<dbReference type="NCBIfam" id="TIGR01024">
    <property type="entry name" value="rplS_bact"/>
    <property type="match status" value="1"/>
</dbReference>
<dbReference type="PANTHER" id="PTHR15680:SF9">
    <property type="entry name" value="LARGE RIBOSOMAL SUBUNIT PROTEIN BL19M"/>
    <property type="match status" value="1"/>
</dbReference>
<dbReference type="PANTHER" id="PTHR15680">
    <property type="entry name" value="RIBOSOMAL PROTEIN L19"/>
    <property type="match status" value="1"/>
</dbReference>
<dbReference type="Pfam" id="PF01245">
    <property type="entry name" value="Ribosomal_L19"/>
    <property type="match status" value="1"/>
</dbReference>
<dbReference type="PIRSF" id="PIRSF002191">
    <property type="entry name" value="Ribosomal_L19"/>
    <property type="match status" value="1"/>
</dbReference>
<dbReference type="PRINTS" id="PR00061">
    <property type="entry name" value="RIBOSOMALL19"/>
</dbReference>
<dbReference type="SUPFAM" id="SSF50104">
    <property type="entry name" value="Translation proteins SH3-like domain"/>
    <property type="match status" value="1"/>
</dbReference>
<dbReference type="PROSITE" id="PS01015">
    <property type="entry name" value="RIBOSOMAL_L19"/>
    <property type="match status" value="1"/>
</dbReference>
<organism>
    <name type="scientific">Orientia tsutsugamushi (strain Boryong)</name>
    <name type="common">Rickettsia tsutsugamushi</name>
    <dbReference type="NCBI Taxonomy" id="357244"/>
    <lineage>
        <taxon>Bacteria</taxon>
        <taxon>Pseudomonadati</taxon>
        <taxon>Pseudomonadota</taxon>
        <taxon>Alphaproteobacteria</taxon>
        <taxon>Rickettsiales</taxon>
        <taxon>Rickettsiaceae</taxon>
        <taxon>Rickettsieae</taxon>
        <taxon>Orientia</taxon>
    </lineage>
</organism>
<accession>A5CCN0</accession>
<proteinExistence type="inferred from homology"/>